<feature type="chain" id="PRO_1000192442" description="Transcription antitermination protein NusB">
    <location>
        <begin position="1"/>
        <end position="145"/>
    </location>
</feature>
<sequence>MSSRREGRELALQALYSSDAESLGGTFALKKIMDNFADGSEPSLDVHGRSFTFATELVNGVLSNSEAIDRKIEEKSKNWSIARMAKVDLNILRLAVFELFYRPDIPKNVTINEAIEVAKKFGAEDSPAFINGILDEIASSLPDKE</sequence>
<accession>B9M1E7</accession>
<keyword id="KW-1185">Reference proteome</keyword>
<keyword id="KW-0694">RNA-binding</keyword>
<keyword id="KW-0804">Transcription</keyword>
<keyword id="KW-0889">Transcription antitermination</keyword>
<keyword id="KW-0805">Transcription regulation</keyword>
<reference key="1">
    <citation type="submission" date="2009-01" db="EMBL/GenBank/DDBJ databases">
        <title>Complete sequence of Geobacter sp. FRC-32.</title>
        <authorList>
            <consortium name="US DOE Joint Genome Institute"/>
            <person name="Lucas S."/>
            <person name="Copeland A."/>
            <person name="Lapidus A."/>
            <person name="Glavina del Rio T."/>
            <person name="Dalin E."/>
            <person name="Tice H."/>
            <person name="Bruce D."/>
            <person name="Goodwin L."/>
            <person name="Pitluck S."/>
            <person name="Saunders E."/>
            <person name="Brettin T."/>
            <person name="Detter J.C."/>
            <person name="Han C."/>
            <person name="Larimer F."/>
            <person name="Land M."/>
            <person name="Hauser L."/>
            <person name="Kyrpides N."/>
            <person name="Ovchinnikova G."/>
            <person name="Kostka J."/>
            <person name="Richardson P."/>
        </authorList>
    </citation>
    <scope>NUCLEOTIDE SEQUENCE [LARGE SCALE GENOMIC DNA]</scope>
    <source>
        <strain>DSM 22248 / JCM 15807 / FRC-32</strain>
    </source>
</reference>
<organism>
    <name type="scientific">Geotalea daltonii (strain DSM 22248 / JCM 15807 / FRC-32)</name>
    <name type="common">Geobacter daltonii</name>
    <dbReference type="NCBI Taxonomy" id="316067"/>
    <lineage>
        <taxon>Bacteria</taxon>
        <taxon>Pseudomonadati</taxon>
        <taxon>Thermodesulfobacteriota</taxon>
        <taxon>Desulfuromonadia</taxon>
        <taxon>Geobacterales</taxon>
        <taxon>Geobacteraceae</taxon>
        <taxon>Geotalea</taxon>
    </lineage>
</organism>
<proteinExistence type="inferred from homology"/>
<name>NUSB_GEODF</name>
<comment type="function">
    <text evidence="1">Involved in transcription antitermination. Required for transcription of ribosomal RNA (rRNA) genes. Binds specifically to the boxA antiterminator sequence of the ribosomal RNA (rrn) operons.</text>
</comment>
<comment type="similarity">
    <text evidence="1">Belongs to the NusB family.</text>
</comment>
<dbReference type="EMBL" id="CP001390">
    <property type="protein sequence ID" value="ACM21029.1"/>
    <property type="molecule type" value="Genomic_DNA"/>
</dbReference>
<dbReference type="RefSeq" id="WP_012647757.1">
    <property type="nucleotide sequence ID" value="NC_011979.1"/>
</dbReference>
<dbReference type="SMR" id="B9M1E7"/>
<dbReference type="STRING" id="316067.Geob_2679"/>
<dbReference type="KEGG" id="geo:Geob_2679"/>
<dbReference type="eggNOG" id="COG0781">
    <property type="taxonomic scope" value="Bacteria"/>
</dbReference>
<dbReference type="HOGENOM" id="CLU_087843_3_3_7"/>
<dbReference type="OrthoDB" id="9797817at2"/>
<dbReference type="Proteomes" id="UP000007721">
    <property type="component" value="Chromosome"/>
</dbReference>
<dbReference type="GO" id="GO:0005829">
    <property type="term" value="C:cytosol"/>
    <property type="evidence" value="ECO:0007669"/>
    <property type="project" value="TreeGrafter"/>
</dbReference>
<dbReference type="GO" id="GO:0003723">
    <property type="term" value="F:RNA binding"/>
    <property type="evidence" value="ECO:0007669"/>
    <property type="project" value="UniProtKB-UniRule"/>
</dbReference>
<dbReference type="GO" id="GO:0006353">
    <property type="term" value="P:DNA-templated transcription termination"/>
    <property type="evidence" value="ECO:0007669"/>
    <property type="project" value="UniProtKB-UniRule"/>
</dbReference>
<dbReference type="GO" id="GO:0031564">
    <property type="term" value="P:transcription antitermination"/>
    <property type="evidence" value="ECO:0007669"/>
    <property type="project" value="UniProtKB-KW"/>
</dbReference>
<dbReference type="CDD" id="cd00619">
    <property type="entry name" value="Terminator_NusB"/>
    <property type="match status" value="1"/>
</dbReference>
<dbReference type="Gene3D" id="1.10.940.10">
    <property type="entry name" value="NusB-like"/>
    <property type="match status" value="1"/>
</dbReference>
<dbReference type="HAMAP" id="MF_00073">
    <property type="entry name" value="NusB"/>
    <property type="match status" value="1"/>
</dbReference>
<dbReference type="InterPro" id="IPR035926">
    <property type="entry name" value="NusB-like_sf"/>
</dbReference>
<dbReference type="InterPro" id="IPR011605">
    <property type="entry name" value="NusB_fam"/>
</dbReference>
<dbReference type="InterPro" id="IPR006027">
    <property type="entry name" value="NusB_RsmB_TIM44"/>
</dbReference>
<dbReference type="NCBIfam" id="TIGR01951">
    <property type="entry name" value="nusB"/>
    <property type="match status" value="1"/>
</dbReference>
<dbReference type="PANTHER" id="PTHR11078:SF3">
    <property type="entry name" value="ANTITERMINATION NUSB DOMAIN-CONTAINING PROTEIN"/>
    <property type="match status" value="1"/>
</dbReference>
<dbReference type="PANTHER" id="PTHR11078">
    <property type="entry name" value="N UTILIZATION SUBSTANCE PROTEIN B-RELATED"/>
    <property type="match status" value="1"/>
</dbReference>
<dbReference type="Pfam" id="PF01029">
    <property type="entry name" value="NusB"/>
    <property type="match status" value="1"/>
</dbReference>
<dbReference type="SUPFAM" id="SSF48013">
    <property type="entry name" value="NusB-like"/>
    <property type="match status" value="1"/>
</dbReference>
<evidence type="ECO:0000255" key="1">
    <source>
        <dbReference type="HAMAP-Rule" id="MF_00073"/>
    </source>
</evidence>
<gene>
    <name evidence="1" type="primary">nusB</name>
    <name type="ordered locus">Geob_2679</name>
</gene>
<protein>
    <recommendedName>
        <fullName evidence="1">Transcription antitermination protein NusB</fullName>
    </recommendedName>
    <alternativeName>
        <fullName evidence="1">Antitermination factor NusB</fullName>
    </alternativeName>
</protein>